<keyword id="KW-0175">Coiled coil</keyword>
<keyword id="KW-1185">Reference proteome</keyword>
<gene>
    <name type="primary">TPD52L1</name>
</gene>
<accession>Q9I8F4</accession>
<dbReference type="EMBL" id="AY004870">
    <property type="protein sequence ID" value="AAF87084.1"/>
    <property type="molecule type" value="mRNA"/>
</dbReference>
<dbReference type="RefSeq" id="NP_989546.1">
    <property type="nucleotide sequence ID" value="NM_204215.2"/>
</dbReference>
<dbReference type="SMR" id="Q9I8F4"/>
<dbReference type="FunCoup" id="Q9I8F4">
    <property type="interactions" value="487"/>
</dbReference>
<dbReference type="STRING" id="9031.ENSGALP00000023914"/>
<dbReference type="PaxDb" id="9031-ENSGALP00000023914"/>
<dbReference type="GeneID" id="374049"/>
<dbReference type="KEGG" id="gga:374049"/>
<dbReference type="CTD" id="7164"/>
<dbReference type="VEuPathDB" id="HostDB:geneid_374049"/>
<dbReference type="eggNOG" id="KOG4010">
    <property type="taxonomic scope" value="Eukaryota"/>
</dbReference>
<dbReference type="InParanoid" id="Q9I8F4"/>
<dbReference type="OMA" id="MEAQARX"/>
<dbReference type="OrthoDB" id="10000687at2759"/>
<dbReference type="PhylomeDB" id="Q9I8F4"/>
<dbReference type="Reactome" id="R-GGA-432722">
    <property type="pathway name" value="Golgi Associated Vesicle Biogenesis"/>
</dbReference>
<dbReference type="PRO" id="PR:Q9I8F4"/>
<dbReference type="Proteomes" id="UP000000539">
    <property type="component" value="Chromosome 3"/>
</dbReference>
<dbReference type="Bgee" id="ENSGALG00000014843">
    <property type="expression patterns" value="Expressed in cerebellum and 3 other cell types or tissues"/>
</dbReference>
<dbReference type="GO" id="GO:0005737">
    <property type="term" value="C:cytoplasm"/>
    <property type="evidence" value="ECO:0000250"/>
    <property type="project" value="UniProtKB"/>
</dbReference>
<dbReference type="GO" id="GO:0005769">
    <property type="term" value="C:early endosome"/>
    <property type="evidence" value="ECO:0000314"/>
    <property type="project" value="MGI"/>
</dbReference>
<dbReference type="GO" id="GO:0048471">
    <property type="term" value="C:perinuclear region of cytoplasm"/>
    <property type="evidence" value="ECO:0000250"/>
    <property type="project" value="UniProtKB"/>
</dbReference>
<dbReference type="GO" id="GO:0042803">
    <property type="term" value="F:protein homodimerization activity"/>
    <property type="evidence" value="ECO:0000250"/>
    <property type="project" value="UniProtKB"/>
</dbReference>
<dbReference type="GO" id="GO:0000086">
    <property type="term" value="P:G2/M transition of mitotic cell cycle"/>
    <property type="evidence" value="ECO:0000250"/>
    <property type="project" value="UniProtKB"/>
</dbReference>
<dbReference type="GO" id="GO:2001235">
    <property type="term" value="P:positive regulation of apoptotic signaling pathway"/>
    <property type="evidence" value="ECO:0000318"/>
    <property type="project" value="GO_Central"/>
</dbReference>
<dbReference type="GO" id="GO:0046330">
    <property type="term" value="P:positive regulation of JNK cascade"/>
    <property type="evidence" value="ECO:0000318"/>
    <property type="project" value="GO_Central"/>
</dbReference>
<dbReference type="InterPro" id="IPR007327">
    <property type="entry name" value="TPD52"/>
</dbReference>
<dbReference type="PANTHER" id="PTHR19307">
    <property type="entry name" value="TUMOR PROTEIN D52"/>
    <property type="match status" value="1"/>
</dbReference>
<dbReference type="PANTHER" id="PTHR19307:SF8">
    <property type="entry name" value="TUMOR PROTEIN D53"/>
    <property type="match status" value="1"/>
</dbReference>
<dbReference type="Pfam" id="PF04201">
    <property type="entry name" value="TPD52"/>
    <property type="match status" value="1"/>
</dbReference>
<feature type="chain" id="PRO_0000185743" description="Tumor protein D53 homolog">
    <location>
        <begin position="1"/>
        <end position="210"/>
    </location>
</feature>
<feature type="region of interest" description="Disordered" evidence="3">
    <location>
        <begin position="185"/>
        <end position="210"/>
    </location>
</feature>
<feature type="coiled-coil region" evidence="2">
    <location>
        <begin position="22"/>
        <end position="73"/>
    </location>
</feature>
<feature type="compositionally biased region" description="Polar residues" evidence="3">
    <location>
        <begin position="185"/>
        <end position="197"/>
    </location>
</feature>
<name>TPD53_CHICK</name>
<reference key="1">
    <citation type="submission" date="2000-07" db="EMBL/GenBank/DDBJ databases">
        <authorList>
            <person name="Proux V.A."/>
            <person name="Calothy G."/>
            <person name="Marx M."/>
        </authorList>
    </citation>
    <scope>NUCLEOTIDE SEQUENCE [MRNA]</scope>
</reference>
<proteinExistence type="evidence at transcript level"/>
<organism>
    <name type="scientific">Gallus gallus</name>
    <name type="common">Chicken</name>
    <dbReference type="NCBI Taxonomy" id="9031"/>
    <lineage>
        <taxon>Eukaryota</taxon>
        <taxon>Metazoa</taxon>
        <taxon>Chordata</taxon>
        <taxon>Craniata</taxon>
        <taxon>Vertebrata</taxon>
        <taxon>Euteleostomi</taxon>
        <taxon>Archelosauria</taxon>
        <taxon>Archosauria</taxon>
        <taxon>Dinosauria</taxon>
        <taxon>Saurischia</taxon>
        <taxon>Theropoda</taxon>
        <taxon>Coelurosauria</taxon>
        <taxon>Aves</taxon>
        <taxon>Neognathae</taxon>
        <taxon>Galloanserae</taxon>
        <taxon>Galliformes</taxon>
        <taxon>Phasianidae</taxon>
        <taxon>Phasianinae</taxon>
        <taxon>Gallus</taxon>
    </lineage>
</organism>
<protein>
    <recommendedName>
        <fullName>Tumor protein D53 homolog</fullName>
    </recommendedName>
    <alternativeName>
        <fullName>Tumor protein D52-like 1</fullName>
    </alternativeName>
</protein>
<sequence length="210" mass="23253">MERQARGLLETQSLHEADEDMVTDVDFTSMISEEEKEELKAELAKLEDEISTLRQVLAAKEKHLIEIKQKLGMSLMNELKQNFSKSWHDMQTTSAYKKTHETLSHAGQKATAAISNVGTAISKKFGDMRSHSISYSIRHSISMPAMRNSPTFKSFEEKVETTVTSLKTKVGGTSHTGGSFEEVLSSTAHASAQSSLAGTRLPESEEELQC</sequence>
<comment type="subunit">
    <text evidence="1">Forms a homodimer or heterodimer with other members of the family.</text>
</comment>
<comment type="similarity">
    <text evidence="4">Belongs to the TPD52 family.</text>
</comment>
<evidence type="ECO:0000250" key="1"/>
<evidence type="ECO:0000255" key="2"/>
<evidence type="ECO:0000256" key="3">
    <source>
        <dbReference type="SAM" id="MobiDB-lite"/>
    </source>
</evidence>
<evidence type="ECO:0000305" key="4"/>